<dbReference type="EMBL" id="AE005674">
    <property type="protein sequence ID" value="AAN43410.1"/>
    <property type="molecule type" value="Genomic_DNA"/>
</dbReference>
<dbReference type="EMBL" id="AE014073">
    <property type="protein sequence ID" value="AAP17232.1"/>
    <property type="molecule type" value="Genomic_DNA"/>
</dbReference>
<dbReference type="RefSeq" id="NP_707703.1">
    <property type="nucleotide sequence ID" value="NC_004337.2"/>
</dbReference>
<dbReference type="RefSeq" id="WP_000976476.1">
    <property type="nucleotide sequence ID" value="NZ_WPGW01000041.1"/>
</dbReference>
<dbReference type="SMR" id="P64507"/>
<dbReference type="STRING" id="198214.SF1850"/>
<dbReference type="PaxDb" id="198214-SF1850"/>
<dbReference type="GeneID" id="1025037"/>
<dbReference type="KEGG" id="sfl:SF1850"/>
<dbReference type="KEGG" id="sfx:S1915"/>
<dbReference type="PATRIC" id="fig|198214.7.peg.2202"/>
<dbReference type="HOGENOM" id="CLU_164849_1_0_6"/>
<dbReference type="Proteomes" id="UP000001006">
    <property type="component" value="Chromosome"/>
</dbReference>
<dbReference type="Proteomes" id="UP000002673">
    <property type="component" value="Chromosome"/>
</dbReference>
<dbReference type="InterPro" id="IPR019648">
    <property type="entry name" value="YebY"/>
</dbReference>
<dbReference type="Pfam" id="PF10709">
    <property type="entry name" value="DUF2511"/>
    <property type="match status" value="1"/>
</dbReference>
<organism>
    <name type="scientific">Shigella flexneri</name>
    <dbReference type="NCBI Taxonomy" id="623"/>
    <lineage>
        <taxon>Bacteria</taxon>
        <taxon>Pseudomonadati</taxon>
        <taxon>Pseudomonadota</taxon>
        <taxon>Gammaproteobacteria</taxon>
        <taxon>Enterobacterales</taxon>
        <taxon>Enterobacteriaceae</taxon>
        <taxon>Shigella</taxon>
    </lineage>
</organism>
<reference key="1">
    <citation type="journal article" date="2002" name="Nucleic Acids Res.">
        <title>Genome sequence of Shigella flexneri 2a: insights into pathogenicity through comparison with genomes of Escherichia coli K12 and O157.</title>
        <authorList>
            <person name="Jin Q."/>
            <person name="Yuan Z."/>
            <person name="Xu J."/>
            <person name="Wang Y."/>
            <person name="Shen Y."/>
            <person name="Lu W."/>
            <person name="Wang J."/>
            <person name="Liu H."/>
            <person name="Yang J."/>
            <person name="Yang F."/>
            <person name="Zhang X."/>
            <person name="Zhang J."/>
            <person name="Yang G."/>
            <person name="Wu H."/>
            <person name="Qu D."/>
            <person name="Dong J."/>
            <person name="Sun L."/>
            <person name="Xue Y."/>
            <person name="Zhao A."/>
            <person name="Gao Y."/>
            <person name="Zhu J."/>
            <person name="Kan B."/>
            <person name="Ding K."/>
            <person name="Chen S."/>
            <person name="Cheng H."/>
            <person name="Yao Z."/>
            <person name="He B."/>
            <person name="Chen R."/>
            <person name="Ma D."/>
            <person name="Qiang B."/>
            <person name="Wen Y."/>
            <person name="Hou Y."/>
            <person name="Yu J."/>
        </authorList>
    </citation>
    <scope>NUCLEOTIDE SEQUENCE [LARGE SCALE GENOMIC DNA]</scope>
    <source>
        <strain>301 / Serotype 2a</strain>
    </source>
</reference>
<reference key="2">
    <citation type="journal article" date="2003" name="Infect. Immun.">
        <title>Complete genome sequence and comparative genomics of Shigella flexneri serotype 2a strain 2457T.</title>
        <authorList>
            <person name="Wei J."/>
            <person name="Goldberg M.B."/>
            <person name="Burland V."/>
            <person name="Venkatesan M.M."/>
            <person name="Deng W."/>
            <person name="Fournier G."/>
            <person name="Mayhew G.F."/>
            <person name="Plunkett G. III"/>
            <person name="Rose D.J."/>
            <person name="Darling A."/>
            <person name="Mau B."/>
            <person name="Perna N.T."/>
            <person name="Payne S.M."/>
            <person name="Runyen-Janecky L.J."/>
            <person name="Zhou S."/>
            <person name="Schwartz D.C."/>
            <person name="Blattner F.R."/>
        </authorList>
    </citation>
    <scope>NUCLEOTIDE SEQUENCE [LARGE SCALE GENOMIC DNA]</scope>
    <source>
        <strain>ATCC 700930 / 2457T / Serotype 2a</strain>
    </source>
</reference>
<proteinExistence type="inferred from homology"/>
<accession>P64507</accession>
<accession>P76277</accession>
<gene>
    <name type="primary">yebY</name>
    <name type="ordered locus">SF1850</name>
    <name type="ordered locus">S1915</name>
</gene>
<feature type="signal peptide" evidence="1">
    <location>
        <begin position="1"/>
        <end position="20"/>
    </location>
</feature>
<feature type="chain" id="PRO_0000013862" description="Uncharacterized protein YebY">
    <location>
        <begin position="21"/>
        <end position="113"/>
    </location>
</feature>
<sequence length="113" mass="12378">MMKKSILAFLLLTSSAAALAAPQVITVSRFEVGKDKWAFNREEVMLTCRPGNALYVINPSTLVQYPLNDIAQKEVASGKTNAQPISVIQIDDPNNPGEKMSLAPFIERAEKLC</sequence>
<keyword id="KW-1185">Reference proteome</keyword>
<keyword id="KW-0732">Signal</keyword>
<name>YEBY_SHIFL</name>
<protein>
    <recommendedName>
        <fullName>Uncharacterized protein YebY</fullName>
    </recommendedName>
</protein>
<evidence type="ECO:0000255" key="1"/>